<protein>
    <recommendedName>
        <fullName>TBC1 domain family member 22A</fullName>
    </recommendedName>
</protein>
<accession>Q8R5A6</accession>
<accession>Q3U268</accession>
<accession>Q3U3T0</accession>
<accession>Q8CA49</accession>
<feature type="initiator methionine" description="Removed" evidence="2">
    <location>
        <position position="1"/>
    </location>
</feature>
<feature type="chain" id="PRO_0000208053" description="TBC1 domain family member 22A">
    <location>
        <begin position="2"/>
        <end position="516"/>
    </location>
</feature>
<feature type="domain" description="Rab-GAP TBC" evidence="3">
    <location>
        <begin position="221"/>
        <end position="445"/>
    </location>
</feature>
<feature type="region of interest" description="Disordered" evidence="4">
    <location>
        <begin position="63"/>
        <end position="88"/>
    </location>
</feature>
<feature type="region of interest" description="Disordered" evidence="4">
    <location>
        <begin position="102"/>
        <end position="186"/>
    </location>
</feature>
<feature type="compositionally biased region" description="Polar residues" evidence="4">
    <location>
        <begin position="107"/>
        <end position="116"/>
    </location>
</feature>
<feature type="compositionally biased region" description="Pro residues" evidence="4">
    <location>
        <begin position="122"/>
        <end position="133"/>
    </location>
</feature>
<feature type="compositionally biased region" description="Polar residues" evidence="4">
    <location>
        <begin position="143"/>
        <end position="179"/>
    </location>
</feature>
<feature type="modified residue" description="N-acetylalanine" evidence="2">
    <location>
        <position position="2"/>
    </location>
</feature>
<feature type="modified residue" description="Phosphoserine" evidence="7">
    <location>
        <position position="144"/>
    </location>
</feature>
<feature type="modified residue" description="Phosphoserine" evidence="8">
    <location>
        <position position="166"/>
    </location>
</feature>
<feature type="splice variant" id="VSP_016761" description="In isoform 2." evidence="5">
    <original>MASDGARKQFWKRSNSKVPGSIQHVYGAQHPPFDPLLHGTL</original>
    <variation>MRSGHGQRRGQEAVLEAQQQQGSRAASSMCMEPSTHRLIRCYMAPC</variation>
    <location>
        <begin position="1"/>
        <end position="41"/>
    </location>
</feature>
<feature type="sequence conflict" description="In Ref. 1; BAE33274/BAE32447." evidence="6" ref="1">
    <original>E</original>
    <variation>D</variation>
    <location>
        <position position="120"/>
    </location>
</feature>
<gene>
    <name type="primary">Tbc1d22a</name>
    <name type="synonym">D15Ertd781e</name>
</gene>
<dbReference type="EMBL" id="AK039627">
    <property type="protein sequence ID" value="BAC30403.1"/>
    <property type="molecule type" value="mRNA"/>
</dbReference>
<dbReference type="EMBL" id="AK154226">
    <property type="protein sequence ID" value="BAE32447.1"/>
    <property type="molecule type" value="mRNA"/>
</dbReference>
<dbReference type="EMBL" id="AK154602">
    <property type="protein sequence ID" value="BAE32705.1"/>
    <property type="molecule type" value="mRNA"/>
</dbReference>
<dbReference type="EMBL" id="AK155459">
    <property type="protein sequence ID" value="BAE33274.1"/>
    <property type="molecule type" value="mRNA"/>
</dbReference>
<dbReference type="EMBL" id="AK155770">
    <property type="protein sequence ID" value="BAE33429.1"/>
    <property type="molecule type" value="mRNA"/>
</dbReference>
<dbReference type="EMBL" id="AK146872">
    <property type="protein sequence ID" value="BAE27495.1"/>
    <property type="molecule type" value="mRNA"/>
</dbReference>
<dbReference type="EMBL" id="BC023106">
    <property type="protein sequence ID" value="AAH23106.1"/>
    <property type="status" value="ALT_INIT"/>
    <property type="molecule type" value="mRNA"/>
</dbReference>
<dbReference type="EMBL" id="BC066009">
    <property type="protein sequence ID" value="AAH66009.1"/>
    <property type="molecule type" value="mRNA"/>
</dbReference>
<dbReference type="CCDS" id="CCDS27729.1">
    <molecule id="Q8R5A6-1"/>
</dbReference>
<dbReference type="RefSeq" id="NP_663451.2">
    <molecule id="Q8R5A6-1"/>
    <property type="nucleotide sequence ID" value="NM_145476.2"/>
</dbReference>
<dbReference type="RefSeq" id="XP_017172065.1">
    <property type="nucleotide sequence ID" value="XM_017316576.1"/>
</dbReference>
<dbReference type="SMR" id="Q8R5A6"/>
<dbReference type="BioGRID" id="230190">
    <property type="interactions" value="5"/>
</dbReference>
<dbReference type="FunCoup" id="Q8R5A6">
    <property type="interactions" value="3233"/>
</dbReference>
<dbReference type="IntAct" id="Q8R5A6">
    <property type="interactions" value="1"/>
</dbReference>
<dbReference type="MINT" id="Q8R5A6"/>
<dbReference type="STRING" id="10090.ENSMUSP00000065721"/>
<dbReference type="iPTMnet" id="Q8R5A6"/>
<dbReference type="PhosphoSitePlus" id="Q8R5A6"/>
<dbReference type="jPOST" id="Q8R5A6"/>
<dbReference type="PaxDb" id="10090-ENSMUSP00000065721"/>
<dbReference type="PeptideAtlas" id="Q8R5A6"/>
<dbReference type="ProteomicsDB" id="263071">
    <molecule id="Q8R5A6-1"/>
</dbReference>
<dbReference type="ProteomicsDB" id="263072">
    <molecule id="Q8R5A6-2"/>
</dbReference>
<dbReference type="Pumba" id="Q8R5A6"/>
<dbReference type="Antibodypedia" id="242">
    <property type="antibodies" value="161 antibodies from 22 providers"/>
</dbReference>
<dbReference type="Ensembl" id="ENSMUST00000063414.9">
    <molecule id="Q8R5A6-1"/>
    <property type="protein sequence ID" value="ENSMUSP00000065721.9"/>
    <property type="gene ID" value="ENSMUSG00000051864.11"/>
</dbReference>
<dbReference type="GeneID" id="223754"/>
<dbReference type="KEGG" id="mmu:223754"/>
<dbReference type="UCSC" id="uc007xea.1">
    <molecule id="Q8R5A6-1"/>
    <property type="organism name" value="mouse"/>
</dbReference>
<dbReference type="AGR" id="MGI:1289265"/>
<dbReference type="CTD" id="25771"/>
<dbReference type="MGI" id="MGI:1289265">
    <property type="gene designation" value="Tbc1d22a"/>
</dbReference>
<dbReference type="VEuPathDB" id="HostDB:ENSMUSG00000051864"/>
<dbReference type="eggNOG" id="KOG1092">
    <property type="taxonomic scope" value="Eukaryota"/>
</dbReference>
<dbReference type="GeneTree" id="ENSGT00940000159840"/>
<dbReference type="HOGENOM" id="CLU_018687_6_0_1"/>
<dbReference type="InParanoid" id="Q8R5A6"/>
<dbReference type="OMA" id="VHWGNEE"/>
<dbReference type="OrthoDB" id="26371at2759"/>
<dbReference type="PhylomeDB" id="Q8R5A6"/>
<dbReference type="TreeFam" id="TF314211"/>
<dbReference type="BioGRID-ORCS" id="223754">
    <property type="hits" value="3 hits in 78 CRISPR screens"/>
</dbReference>
<dbReference type="ChiTaRS" id="Tbc1d22a">
    <property type="organism name" value="mouse"/>
</dbReference>
<dbReference type="PRO" id="PR:Q8R5A6"/>
<dbReference type="Proteomes" id="UP000000589">
    <property type="component" value="Chromosome 15"/>
</dbReference>
<dbReference type="RNAct" id="Q8R5A6">
    <property type="molecule type" value="protein"/>
</dbReference>
<dbReference type="Bgee" id="ENSMUSG00000051864">
    <property type="expression patterns" value="Expressed in lumbar dorsal root ganglion and 263 other cell types or tissues"/>
</dbReference>
<dbReference type="ExpressionAtlas" id="Q8R5A6">
    <property type="expression patterns" value="baseline and differential"/>
</dbReference>
<dbReference type="GO" id="GO:0071889">
    <property type="term" value="F:14-3-3 protein binding"/>
    <property type="evidence" value="ECO:0000250"/>
    <property type="project" value="UniProtKB"/>
</dbReference>
<dbReference type="GO" id="GO:0005096">
    <property type="term" value="F:GTPase activator activity"/>
    <property type="evidence" value="ECO:0007669"/>
    <property type="project" value="UniProtKB-KW"/>
</dbReference>
<dbReference type="GO" id="GO:0042803">
    <property type="term" value="F:protein homodimerization activity"/>
    <property type="evidence" value="ECO:0000250"/>
    <property type="project" value="UniProtKB"/>
</dbReference>
<dbReference type="FunFam" id="1.10.10.750:FF:000009">
    <property type="entry name" value="TBC1 domain family member 22A"/>
    <property type="match status" value="1"/>
</dbReference>
<dbReference type="FunFam" id="1.10.472.80:FF:000001">
    <property type="entry name" value="TBC1 domain family member 22B"/>
    <property type="match status" value="1"/>
</dbReference>
<dbReference type="FunFam" id="1.10.8.270:FF:000004">
    <property type="entry name" value="TBC1 domain family, member 22B"/>
    <property type="match status" value="1"/>
</dbReference>
<dbReference type="Gene3D" id="1.10.8.270">
    <property type="entry name" value="putative rabgap domain of human tbc1 domain family member 14 like domains"/>
    <property type="match status" value="1"/>
</dbReference>
<dbReference type="Gene3D" id="1.10.472.80">
    <property type="entry name" value="Ypt/Rab-GAP domain of gyp1p, domain 3"/>
    <property type="match status" value="1"/>
</dbReference>
<dbReference type="InterPro" id="IPR000195">
    <property type="entry name" value="Rab-GAP-TBC_dom"/>
</dbReference>
<dbReference type="InterPro" id="IPR035969">
    <property type="entry name" value="Rab-GAP_TBC_sf"/>
</dbReference>
<dbReference type="PANTHER" id="PTHR22957:SF255">
    <property type="entry name" value="TBC1 DOMAIN FAMILY MEMBER 22A"/>
    <property type="match status" value="1"/>
</dbReference>
<dbReference type="PANTHER" id="PTHR22957">
    <property type="entry name" value="TBC1 DOMAIN FAMILY MEMBER GTPASE-ACTIVATING PROTEIN"/>
    <property type="match status" value="1"/>
</dbReference>
<dbReference type="Pfam" id="PF00566">
    <property type="entry name" value="RabGAP-TBC"/>
    <property type="match status" value="1"/>
</dbReference>
<dbReference type="SMART" id="SM00164">
    <property type="entry name" value="TBC"/>
    <property type="match status" value="1"/>
</dbReference>
<dbReference type="SUPFAM" id="SSF47923">
    <property type="entry name" value="Ypt/Rab-GAP domain of gyp1p"/>
    <property type="match status" value="2"/>
</dbReference>
<dbReference type="PROSITE" id="PS50086">
    <property type="entry name" value="TBC_RABGAP"/>
    <property type="match status" value="1"/>
</dbReference>
<evidence type="ECO:0000250" key="1"/>
<evidence type="ECO:0000250" key="2">
    <source>
        <dbReference type="UniProtKB" id="Q8WUA7"/>
    </source>
</evidence>
<evidence type="ECO:0000255" key="3">
    <source>
        <dbReference type="PROSITE-ProRule" id="PRU00163"/>
    </source>
</evidence>
<evidence type="ECO:0000256" key="4">
    <source>
        <dbReference type="SAM" id="MobiDB-lite"/>
    </source>
</evidence>
<evidence type="ECO:0000303" key="5">
    <source>
    </source>
</evidence>
<evidence type="ECO:0000305" key="6"/>
<evidence type="ECO:0007744" key="7">
    <source>
    </source>
</evidence>
<evidence type="ECO:0007744" key="8">
    <source>
    </source>
</evidence>
<reference key="1">
    <citation type="journal article" date="2005" name="Science">
        <title>The transcriptional landscape of the mammalian genome.</title>
        <authorList>
            <person name="Carninci P."/>
            <person name="Kasukawa T."/>
            <person name="Katayama S."/>
            <person name="Gough J."/>
            <person name="Frith M.C."/>
            <person name="Maeda N."/>
            <person name="Oyama R."/>
            <person name="Ravasi T."/>
            <person name="Lenhard B."/>
            <person name="Wells C."/>
            <person name="Kodzius R."/>
            <person name="Shimokawa K."/>
            <person name="Bajic V.B."/>
            <person name="Brenner S.E."/>
            <person name="Batalov S."/>
            <person name="Forrest A.R."/>
            <person name="Zavolan M."/>
            <person name="Davis M.J."/>
            <person name="Wilming L.G."/>
            <person name="Aidinis V."/>
            <person name="Allen J.E."/>
            <person name="Ambesi-Impiombato A."/>
            <person name="Apweiler R."/>
            <person name="Aturaliya R.N."/>
            <person name="Bailey T.L."/>
            <person name="Bansal M."/>
            <person name="Baxter L."/>
            <person name="Beisel K.W."/>
            <person name="Bersano T."/>
            <person name="Bono H."/>
            <person name="Chalk A.M."/>
            <person name="Chiu K.P."/>
            <person name="Choudhary V."/>
            <person name="Christoffels A."/>
            <person name="Clutterbuck D.R."/>
            <person name="Crowe M.L."/>
            <person name="Dalla E."/>
            <person name="Dalrymple B.P."/>
            <person name="de Bono B."/>
            <person name="Della Gatta G."/>
            <person name="di Bernardo D."/>
            <person name="Down T."/>
            <person name="Engstrom P."/>
            <person name="Fagiolini M."/>
            <person name="Faulkner G."/>
            <person name="Fletcher C.F."/>
            <person name="Fukushima T."/>
            <person name="Furuno M."/>
            <person name="Futaki S."/>
            <person name="Gariboldi M."/>
            <person name="Georgii-Hemming P."/>
            <person name="Gingeras T.R."/>
            <person name="Gojobori T."/>
            <person name="Green R.E."/>
            <person name="Gustincich S."/>
            <person name="Harbers M."/>
            <person name="Hayashi Y."/>
            <person name="Hensch T.K."/>
            <person name="Hirokawa N."/>
            <person name="Hill D."/>
            <person name="Huminiecki L."/>
            <person name="Iacono M."/>
            <person name="Ikeo K."/>
            <person name="Iwama A."/>
            <person name="Ishikawa T."/>
            <person name="Jakt M."/>
            <person name="Kanapin A."/>
            <person name="Katoh M."/>
            <person name="Kawasawa Y."/>
            <person name="Kelso J."/>
            <person name="Kitamura H."/>
            <person name="Kitano H."/>
            <person name="Kollias G."/>
            <person name="Krishnan S.P."/>
            <person name="Kruger A."/>
            <person name="Kummerfeld S.K."/>
            <person name="Kurochkin I.V."/>
            <person name="Lareau L.F."/>
            <person name="Lazarevic D."/>
            <person name="Lipovich L."/>
            <person name="Liu J."/>
            <person name="Liuni S."/>
            <person name="McWilliam S."/>
            <person name="Madan Babu M."/>
            <person name="Madera M."/>
            <person name="Marchionni L."/>
            <person name="Matsuda H."/>
            <person name="Matsuzawa S."/>
            <person name="Miki H."/>
            <person name="Mignone F."/>
            <person name="Miyake S."/>
            <person name="Morris K."/>
            <person name="Mottagui-Tabar S."/>
            <person name="Mulder N."/>
            <person name="Nakano N."/>
            <person name="Nakauchi H."/>
            <person name="Ng P."/>
            <person name="Nilsson R."/>
            <person name="Nishiguchi S."/>
            <person name="Nishikawa S."/>
            <person name="Nori F."/>
            <person name="Ohara O."/>
            <person name="Okazaki Y."/>
            <person name="Orlando V."/>
            <person name="Pang K.C."/>
            <person name="Pavan W.J."/>
            <person name="Pavesi G."/>
            <person name="Pesole G."/>
            <person name="Petrovsky N."/>
            <person name="Piazza S."/>
            <person name="Reed J."/>
            <person name="Reid J.F."/>
            <person name="Ring B.Z."/>
            <person name="Ringwald M."/>
            <person name="Rost B."/>
            <person name="Ruan Y."/>
            <person name="Salzberg S.L."/>
            <person name="Sandelin A."/>
            <person name="Schneider C."/>
            <person name="Schoenbach C."/>
            <person name="Sekiguchi K."/>
            <person name="Semple C.A."/>
            <person name="Seno S."/>
            <person name="Sessa L."/>
            <person name="Sheng Y."/>
            <person name="Shibata Y."/>
            <person name="Shimada H."/>
            <person name="Shimada K."/>
            <person name="Silva D."/>
            <person name="Sinclair B."/>
            <person name="Sperling S."/>
            <person name="Stupka E."/>
            <person name="Sugiura K."/>
            <person name="Sultana R."/>
            <person name="Takenaka Y."/>
            <person name="Taki K."/>
            <person name="Tammoja K."/>
            <person name="Tan S.L."/>
            <person name="Tang S."/>
            <person name="Taylor M.S."/>
            <person name="Tegner J."/>
            <person name="Teichmann S.A."/>
            <person name="Ueda H.R."/>
            <person name="van Nimwegen E."/>
            <person name="Verardo R."/>
            <person name="Wei C.L."/>
            <person name="Yagi K."/>
            <person name="Yamanishi H."/>
            <person name="Zabarovsky E."/>
            <person name="Zhu S."/>
            <person name="Zimmer A."/>
            <person name="Hide W."/>
            <person name="Bult C."/>
            <person name="Grimmond S.M."/>
            <person name="Teasdale R.D."/>
            <person name="Liu E.T."/>
            <person name="Brusic V."/>
            <person name="Quackenbush J."/>
            <person name="Wahlestedt C."/>
            <person name="Mattick J.S."/>
            <person name="Hume D.A."/>
            <person name="Kai C."/>
            <person name="Sasaki D."/>
            <person name="Tomaru Y."/>
            <person name="Fukuda S."/>
            <person name="Kanamori-Katayama M."/>
            <person name="Suzuki M."/>
            <person name="Aoki J."/>
            <person name="Arakawa T."/>
            <person name="Iida J."/>
            <person name="Imamura K."/>
            <person name="Itoh M."/>
            <person name="Kato T."/>
            <person name="Kawaji H."/>
            <person name="Kawagashira N."/>
            <person name="Kawashima T."/>
            <person name="Kojima M."/>
            <person name="Kondo S."/>
            <person name="Konno H."/>
            <person name="Nakano K."/>
            <person name="Ninomiya N."/>
            <person name="Nishio T."/>
            <person name="Okada M."/>
            <person name="Plessy C."/>
            <person name="Shibata K."/>
            <person name="Shiraki T."/>
            <person name="Suzuki S."/>
            <person name="Tagami M."/>
            <person name="Waki K."/>
            <person name="Watahiki A."/>
            <person name="Okamura-Oho Y."/>
            <person name="Suzuki H."/>
            <person name="Kawai J."/>
            <person name="Hayashizaki Y."/>
        </authorList>
    </citation>
    <scope>NUCLEOTIDE SEQUENCE [LARGE SCALE MRNA] (ISOFORMS 1 AND 2)</scope>
    <source>
        <strain>C57BL/6J</strain>
        <strain>NOD</strain>
        <tissue>Heart</tissue>
        <tissue>Spinal cord</tissue>
    </source>
</reference>
<reference key="2">
    <citation type="journal article" date="2004" name="Genome Res.">
        <title>The status, quality, and expansion of the NIH full-length cDNA project: the Mammalian Gene Collection (MGC).</title>
        <authorList>
            <consortium name="The MGC Project Team"/>
        </authorList>
    </citation>
    <scope>NUCLEOTIDE SEQUENCE [LARGE SCALE MRNA] (ISOFORM 1)</scope>
    <source>
        <strain>C57BL/6J</strain>
        <tissue>Brain</tissue>
        <tissue>Mammary gland</tissue>
    </source>
</reference>
<reference key="3">
    <citation type="journal article" date="2007" name="Proc. Natl. Acad. Sci. U.S.A.">
        <title>Large-scale phosphorylation analysis of mouse liver.</title>
        <authorList>
            <person name="Villen J."/>
            <person name="Beausoleil S.A."/>
            <person name="Gerber S.A."/>
            <person name="Gygi S.P."/>
        </authorList>
    </citation>
    <scope>PHOSPHORYLATION [LARGE SCALE ANALYSIS] AT SER-144</scope>
    <scope>IDENTIFICATION BY MASS SPECTROMETRY [LARGE SCALE ANALYSIS]</scope>
    <source>
        <tissue>Liver</tissue>
    </source>
</reference>
<reference key="4">
    <citation type="journal article" date="2010" name="Cell">
        <title>A tissue-specific atlas of mouse protein phosphorylation and expression.</title>
        <authorList>
            <person name="Huttlin E.L."/>
            <person name="Jedrychowski M.P."/>
            <person name="Elias J.E."/>
            <person name="Goswami T."/>
            <person name="Rad R."/>
            <person name="Beausoleil S.A."/>
            <person name="Villen J."/>
            <person name="Haas W."/>
            <person name="Sowa M.E."/>
            <person name="Gygi S.P."/>
        </authorList>
    </citation>
    <scope>PHOSPHORYLATION [LARGE SCALE ANALYSIS] AT SER-166</scope>
    <scope>IDENTIFICATION BY MASS SPECTROMETRY [LARGE SCALE ANALYSIS]</scope>
    <source>
        <tissue>Brain</tissue>
        <tissue>Brown adipose tissue</tissue>
        <tissue>Heart</tissue>
        <tissue>Kidney</tissue>
        <tissue>Lung</tissue>
        <tissue>Spleen</tissue>
        <tissue>Testis</tissue>
    </source>
</reference>
<name>TB22A_MOUSE</name>
<sequence>MASDGARKQFWKRSNSKVPGSIQHVYGAQHPPFDPLLHGTLLKSTPKVPTTPVKAKRVSTFQEFESNTSDAWDAGEDDDELLAMATESLNSEVVMETAHRVLRNHSQRQSQPSQKTTEPEPEPQPIAEPPVPPSGDLRLVKSVSESHTPCPSESTGDTVPLQRSQSLPHSATVTLSGTSDPHALADSALSKRETSRLDKFKQLLAGPNTDLEELRKLSWSGIPKPVRPMTWKLLSGYLPANVDRRPATLQRKQKEYFAFIEHYYSSRNDEVHQDTYRQIHIDIPRMSPEALILQPKVTEIFERILFIWAIRHPASGYVQGINDLVTPFFVVFICEYTDREDVDKVDVSSVPAEVLRNIEADTYWCMSKLLDGIQDNYTFAQPGIQMKVKMLEELVSRIDERVHRHLDGHEVRYLQFAFRWMNNLLMRELPLRCTIRLWDTYQSEPEGFSHFHLYVCAAFLVRWRREILEERDFQELLLFLQNLPTARWDDQDVSLLLAEAYRLKFAFADAPNHYKK</sequence>
<proteinExistence type="evidence at protein level"/>
<organism>
    <name type="scientific">Mus musculus</name>
    <name type="common">Mouse</name>
    <dbReference type="NCBI Taxonomy" id="10090"/>
    <lineage>
        <taxon>Eukaryota</taxon>
        <taxon>Metazoa</taxon>
        <taxon>Chordata</taxon>
        <taxon>Craniata</taxon>
        <taxon>Vertebrata</taxon>
        <taxon>Euteleostomi</taxon>
        <taxon>Mammalia</taxon>
        <taxon>Eutheria</taxon>
        <taxon>Euarchontoglires</taxon>
        <taxon>Glires</taxon>
        <taxon>Rodentia</taxon>
        <taxon>Myomorpha</taxon>
        <taxon>Muroidea</taxon>
        <taxon>Muridae</taxon>
        <taxon>Murinae</taxon>
        <taxon>Mus</taxon>
        <taxon>Mus</taxon>
    </lineage>
</organism>
<comment type="function">
    <text evidence="1">May act as a GTPase-activating protein for Rab family protein(s).</text>
</comment>
<comment type="subunit">
    <text evidence="2">Homodimer. Interacts with ACBD3 and ARFGEF1. Interacts with YWHAB, YWHAE, YWHAG, YWHAH, YWHAQ and YWHAZ.</text>
</comment>
<comment type="alternative products">
    <event type="alternative splicing"/>
    <isoform>
        <id>Q8R5A6-1</id>
        <name>1</name>
        <sequence type="displayed"/>
    </isoform>
    <isoform>
        <id>Q8R5A6-2</id>
        <name>2</name>
        <sequence type="described" ref="VSP_016761"/>
    </isoform>
</comment>
<comment type="sequence caution" evidence="6">
    <conflict type="erroneous initiation">
        <sequence resource="EMBL-CDS" id="AAH23106"/>
    </conflict>
</comment>
<keyword id="KW-0007">Acetylation</keyword>
<keyword id="KW-0025">Alternative splicing</keyword>
<keyword id="KW-0343">GTPase activation</keyword>
<keyword id="KW-0597">Phosphoprotein</keyword>
<keyword id="KW-1185">Reference proteome</keyword>